<name>COXX_POLNA</name>
<accession>A1VKM6</accession>
<evidence type="ECO:0000255" key="1">
    <source>
        <dbReference type="HAMAP-Rule" id="MF_00154"/>
    </source>
</evidence>
<proteinExistence type="inferred from homology"/>
<organism>
    <name type="scientific">Polaromonas naphthalenivorans (strain CJ2)</name>
    <dbReference type="NCBI Taxonomy" id="365044"/>
    <lineage>
        <taxon>Bacteria</taxon>
        <taxon>Pseudomonadati</taxon>
        <taxon>Pseudomonadota</taxon>
        <taxon>Betaproteobacteria</taxon>
        <taxon>Burkholderiales</taxon>
        <taxon>Comamonadaceae</taxon>
        <taxon>Polaromonas</taxon>
    </lineage>
</organism>
<feature type="chain" id="PRO_0000327110" description="Protoheme IX farnesyltransferase">
    <location>
        <begin position="1"/>
        <end position="306"/>
    </location>
</feature>
<feature type="transmembrane region" description="Helical" evidence="1">
    <location>
        <begin position="35"/>
        <end position="55"/>
    </location>
</feature>
<feature type="transmembrane region" description="Helical" evidence="1">
    <location>
        <begin position="61"/>
        <end position="81"/>
    </location>
</feature>
<feature type="transmembrane region" description="Helical" evidence="1">
    <location>
        <begin position="106"/>
        <end position="126"/>
    </location>
</feature>
<feature type="transmembrane region" description="Helical" evidence="1">
    <location>
        <begin position="129"/>
        <end position="149"/>
    </location>
</feature>
<feature type="transmembrane region" description="Helical" evidence="1">
    <location>
        <begin position="157"/>
        <end position="177"/>
    </location>
</feature>
<feature type="transmembrane region" description="Helical" evidence="1">
    <location>
        <begin position="183"/>
        <end position="203"/>
    </location>
</feature>
<feature type="transmembrane region" description="Helical" evidence="1">
    <location>
        <begin position="224"/>
        <end position="244"/>
    </location>
</feature>
<feature type="transmembrane region" description="Helical" evidence="1">
    <location>
        <begin position="245"/>
        <end position="265"/>
    </location>
</feature>
<feature type="transmembrane region" description="Helical" evidence="1">
    <location>
        <begin position="286"/>
        <end position="306"/>
    </location>
</feature>
<sequence length="306" mass="33624">MNPSPPSAAATPSSARAPSRFSQFYALTKPRVVQLIVFCALIGMVLAVPGVPTWLDVRLALIACAGIWLVAGAAAAFNCLVEQQIDAKMRRTAWRPTARGQLSNPLTLAFSAGLCALGSWVLYVWVNPLTMWLTFATFVGYAVVYTVILKPLTPQNIVIGGASGAMPPVLGWAAMTGSVGPEALILFLIIFLWTPPHFWALALYRVEDYRKAGLPMLPVTHGNEFTRLQVFLYTLVLFPACLMPFIFKMSGWLYLVAAVLLSIGFSGHAWCLWRNYSDALARKTFRFSLIHLSALFAALLLDHYLI</sequence>
<keyword id="KW-0997">Cell inner membrane</keyword>
<keyword id="KW-1003">Cell membrane</keyword>
<keyword id="KW-0350">Heme biosynthesis</keyword>
<keyword id="KW-0472">Membrane</keyword>
<keyword id="KW-1185">Reference proteome</keyword>
<keyword id="KW-0808">Transferase</keyword>
<keyword id="KW-0812">Transmembrane</keyword>
<keyword id="KW-1133">Transmembrane helix</keyword>
<reference key="1">
    <citation type="journal article" date="2009" name="Environ. Microbiol.">
        <title>The genome of Polaromonas naphthalenivorans strain CJ2, isolated from coal tar-contaminated sediment, reveals physiological and metabolic versatility and evolution through extensive horizontal gene transfer.</title>
        <authorList>
            <person name="Yagi J.M."/>
            <person name="Sims D."/>
            <person name="Brettin T."/>
            <person name="Bruce D."/>
            <person name="Madsen E.L."/>
        </authorList>
    </citation>
    <scope>NUCLEOTIDE SEQUENCE [LARGE SCALE GENOMIC DNA]</scope>
    <source>
        <strain>CJ2</strain>
    </source>
</reference>
<protein>
    <recommendedName>
        <fullName evidence="1">Protoheme IX farnesyltransferase</fullName>
        <ecNumber evidence="1">2.5.1.141</ecNumber>
    </recommendedName>
    <alternativeName>
        <fullName evidence="1">Heme B farnesyltransferase</fullName>
    </alternativeName>
    <alternativeName>
        <fullName evidence="1">Heme O synthase</fullName>
    </alternativeName>
</protein>
<gene>
    <name evidence="1" type="primary">ctaB</name>
    <name type="ordered locus">Pnap_0887</name>
</gene>
<comment type="function">
    <text evidence="1">Converts heme B (protoheme IX) to heme O by substitution of the vinyl group on carbon 2 of heme B porphyrin ring with a hydroxyethyl farnesyl side group.</text>
</comment>
<comment type="catalytic activity">
    <reaction evidence="1">
        <text>heme b + (2E,6E)-farnesyl diphosphate + H2O = Fe(II)-heme o + diphosphate</text>
        <dbReference type="Rhea" id="RHEA:28070"/>
        <dbReference type="ChEBI" id="CHEBI:15377"/>
        <dbReference type="ChEBI" id="CHEBI:33019"/>
        <dbReference type="ChEBI" id="CHEBI:60344"/>
        <dbReference type="ChEBI" id="CHEBI:60530"/>
        <dbReference type="ChEBI" id="CHEBI:175763"/>
        <dbReference type="EC" id="2.5.1.141"/>
    </reaction>
</comment>
<comment type="pathway">
    <text evidence="1">Porphyrin-containing compound metabolism; heme O biosynthesis; heme O from protoheme: step 1/1.</text>
</comment>
<comment type="subcellular location">
    <subcellularLocation>
        <location evidence="1">Cell inner membrane</location>
        <topology evidence="1">Multi-pass membrane protein</topology>
    </subcellularLocation>
</comment>
<comment type="miscellaneous">
    <text evidence="1">Carbon 2 of the heme B porphyrin ring is defined according to the Fischer nomenclature.</text>
</comment>
<comment type="similarity">
    <text evidence="1">Belongs to the UbiA prenyltransferase family. Protoheme IX farnesyltransferase subfamily.</text>
</comment>
<dbReference type="EC" id="2.5.1.141" evidence="1"/>
<dbReference type="EMBL" id="CP000529">
    <property type="protein sequence ID" value="ABM36204.1"/>
    <property type="molecule type" value="Genomic_DNA"/>
</dbReference>
<dbReference type="RefSeq" id="WP_011800298.1">
    <property type="nucleotide sequence ID" value="NC_008781.1"/>
</dbReference>
<dbReference type="SMR" id="A1VKM6"/>
<dbReference type="STRING" id="365044.Pnap_0887"/>
<dbReference type="KEGG" id="pna:Pnap_0887"/>
<dbReference type="eggNOG" id="COG0109">
    <property type="taxonomic scope" value="Bacteria"/>
</dbReference>
<dbReference type="HOGENOM" id="CLU_029631_0_2_4"/>
<dbReference type="OrthoDB" id="9814417at2"/>
<dbReference type="UniPathway" id="UPA00834">
    <property type="reaction ID" value="UER00712"/>
</dbReference>
<dbReference type="Proteomes" id="UP000000644">
    <property type="component" value="Chromosome"/>
</dbReference>
<dbReference type="GO" id="GO:0005886">
    <property type="term" value="C:plasma membrane"/>
    <property type="evidence" value="ECO:0007669"/>
    <property type="project" value="UniProtKB-SubCell"/>
</dbReference>
<dbReference type="GO" id="GO:0008495">
    <property type="term" value="F:protoheme IX farnesyltransferase activity"/>
    <property type="evidence" value="ECO:0007669"/>
    <property type="project" value="UniProtKB-UniRule"/>
</dbReference>
<dbReference type="GO" id="GO:0048034">
    <property type="term" value="P:heme O biosynthetic process"/>
    <property type="evidence" value="ECO:0007669"/>
    <property type="project" value="UniProtKB-UniRule"/>
</dbReference>
<dbReference type="CDD" id="cd13957">
    <property type="entry name" value="PT_UbiA_Cox10"/>
    <property type="match status" value="1"/>
</dbReference>
<dbReference type="Gene3D" id="1.10.357.140">
    <property type="entry name" value="UbiA prenyltransferase"/>
    <property type="match status" value="1"/>
</dbReference>
<dbReference type="HAMAP" id="MF_00154">
    <property type="entry name" value="CyoE_CtaB"/>
    <property type="match status" value="1"/>
</dbReference>
<dbReference type="InterPro" id="IPR006369">
    <property type="entry name" value="Protohaem_IX_farnesylTrfase"/>
</dbReference>
<dbReference type="InterPro" id="IPR000537">
    <property type="entry name" value="UbiA_prenyltransferase"/>
</dbReference>
<dbReference type="InterPro" id="IPR030470">
    <property type="entry name" value="UbiA_prenylTrfase_CS"/>
</dbReference>
<dbReference type="InterPro" id="IPR044878">
    <property type="entry name" value="UbiA_sf"/>
</dbReference>
<dbReference type="NCBIfam" id="TIGR01473">
    <property type="entry name" value="cyoE_ctaB"/>
    <property type="match status" value="1"/>
</dbReference>
<dbReference type="NCBIfam" id="NF003349">
    <property type="entry name" value="PRK04375.1-2"/>
    <property type="match status" value="1"/>
</dbReference>
<dbReference type="PANTHER" id="PTHR43448:SF7">
    <property type="entry name" value="4-HYDROXYBENZOATE SOLANESYLTRANSFERASE"/>
    <property type="match status" value="1"/>
</dbReference>
<dbReference type="PANTHER" id="PTHR43448">
    <property type="entry name" value="PROTOHEME IX FARNESYLTRANSFERASE, MITOCHONDRIAL"/>
    <property type="match status" value="1"/>
</dbReference>
<dbReference type="Pfam" id="PF01040">
    <property type="entry name" value="UbiA"/>
    <property type="match status" value="1"/>
</dbReference>
<dbReference type="PROSITE" id="PS00943">
    <property type="entry name" value="UBIA"/>
    <property type="match status" value="1"/>
</dbReference>